<feature type="chain" id="PRO_0000123738" description="Tritrans,polycis-undecaprenyl-diphosphate synthase (geranylgeranyl-diphosphate specific)">
    <location>
        <begin position="1"/>
        <end position="264"/>
    </location>
</feature>
<feature type="active site" evidence="1">
    <location>
        <position position="43"/>
    </location>
</feature>
<feature type="active site" description="Proton acceptor" evidence="1">
    <location>
        <position position="91"/>
    </location>
</feature>
<feature type="binding site" evidence="1">
    <location>
        <position position="43"/>
    </location>
    <ligand>
        <name>Mg(2+)</name>
        <dbReference type="ChEBI" id="CHEBI:18420"/>
    </ligand>
</feature>
<feature type="binding site" evidence="1">
    <location>
        <begin position="44"/>
        <end position="47"/>
    </location>
    <ligand>
        <name>substrate</name>
    </ligand>
</feature>
<feature type="binding site" evidence="1">
    <location>
        <position position="48"/>
    </location>
    <ligand>
        <name>substrate</name>
    </ligand>
</feature>
<feature type="binding site" evidence="1">
    <location>
        <position position="60"/>
    </location>
    <ligand>
        <name>substrate</name>
    </ligand>
</feature>
<feature type="binding site" evidence="1">
    <location>
        <begin position="88"/>
        <end position="90"/>
    </location>
    <ligand>
        <name>substrate</name>
    </ligand>
</feature>
<feature type="binding site" evidence="1">
    <location>
        <position position="92"/>
    </location>
    <ligand>
        <name>substrate</name>
    </ligand>
</feature>
<feature type="binding site" evidence="1">
    <location>
        <position position="94"/>
    </location>
    <ligand>
        <name>substrate</name>
    </ligand>
</feature>
<feature type="binding site" evidence="1">
    <location>
        <position position="213"/>
    </location>
    <ligand>
        <name>substrate</name>
    </ligand>
</feature>
<feature type="binding site" evidence="1">
    <location>
        <begin position="219"/>
        <end position="221"/>
    </location>
    <ligand>
        <name>substrate</name>
    </ligand>
</feature>
<feature type="binding site" evidence="1">
    <location>
        <position position="232"/>
    </location>
    <ligand>
        <name>Mg(2+)</name>
        <dbReference type="ChEBI" id="CHEBI:18420"/>
    </ligand>
</feature>
<proteinExistence type="inferred from homology"/>
<protein>
    <recommendedName>
        <fullName evidence="1">Tritrans,polycis-undecaprenyl-diphosphate synthase (geranylgeranyl-diphosphate specific)</fullName>
        <ecNumber evidence="1">2.5.1.89</ecNumber>
    </recommendedName>
    <alternativeName>
        <fullName evidence="1">Undecaprenyl diphosphate synthase</fullName>
        <shortName evidence="1">UDS</shortName>
    </alternativeName>
    <alternativeName>
        <fullName evidence="1">Undecaprenyl pyrophosphate synthase</fullName>
        <shortName evidence="1">UPP synthase</shortName>
    </alternativeName>
</protein>
<name>UPPS_PYRFU</name>
<keyword id="KW-0460">Magnesium</keyword>
<keyword id="KW-0479">Metal-binding</keyword>
<keyword id="KW-1185">Reference proteome</keyword>
<keyword id="KW-0808">Transferase</keyword>
<evidence type="ECO:0000255" key="1">
    <source>
        <dbReference type="HAMAP-Rule" id="MF_01139"/>
    </source>
</evidence>
<dbReference type="EC" id="2.5.1.89" evidence="1"/>
<dbReference type="EMBL" id="AE009950">
    <property type="protein sequence ID" value="AAL81723.1"/>
    <property type="molecule type" value="Genomic_DNA"/>
</dbReference>
<dbReference type="RefSeq" id="WP_011012745.1">
    <property type="nucleotide sequence ID" value="NZ_CP023154.1"/>
</dbReference>
<dbReference type="SMR" id="Q8U0I8"/>
<dbReference type="STRING" id="186497.PF1599"/>
<dbReference type="PaxDb" id="186497-PF1599"/>
<dbReference type="GeneID" id="41713423"/>
<dbReference type="KEGG" id="pfu:PF1599"/>
<dbReference type="PATRIC" id="fig|186497.12.peg.1665"/>
<dbReference type="eggNOG" id="arCOG01532">
    <property type="taxonomic scope" value="Archaea"/>
</dbReference>
<dbReference type="HOGENOM" id="CLU_038505_2_0_2"/>
<dbReference type="OrthoDB" id="8293at2157"/>
<dbReference type="PhylomeDB" id="Q8U0I8"/>
<dbReference type="Proteomes" id="UP000001013">
    <property type="component" value="Chromosome"/>
</dbReference>
<dbReference type="GO" id="GO:0045547">
    <property type="term" value="F:ditrans,polycis-polyprenyl diphosphate synthase [(2E,6E)-farnesyl diphosphate specific] activity"/>
    <property type="evidence" value="ECO:0007669"/>
    <property type="project" value="TreeGrafter"/>
</dbReference>
<dbReference type="GO" id="GO:0000287">
    <property type="term" value="F:magnesium ion binding"/>
    <property type="evidence" value="ECO:0007669"/>
    <property type="project" value="UniProtKB-UniRule"/>
</dbReference>
<dbReference type="GO" id="GO:0016094">
    <property type="term" value="P:polyprenol biosynthetic process"/>
    <property type="evidence" value="ECO:0007669"/>
    <property type="project" value="TreeGrafter"/>
</dbReference>
<dbReference type="CDD" id="cd00475">
    <property type="entry name" value="Cis_IPPS"/>
    <property type="match status" value="1"/>
</dbReference>
<dbReference type="FunFam" id="3.40.1180.10:FF:000003">
    <property type="entry name" value="Isoprenyl transferase 2"/>
    <property type="match status" value="1"/>
</dbReference>
<dbReference type="Gene3D" id="3.40.1180.10">
    <property type="entry name" value="Decaprenyl diphosphate synthase-like"/>
    <property type="match status" value="1"/>
</dbReference>
<dbReference type="HAMAP" id="MF_01139">
    <property type="entry name" value="ISPT"/>
    <property type="match status" value="1"/>
</dbReference>
<dbReference type="InterPro" id="IPR001441">
    <property type="entry name" value="UPP_synth-like"/>
</dbReference>
<dbReference type="InterPro" id="IPR018520">
    <property type="entry name" value="UPP_synth-like_CS"/>
</dbReference>
<dbReference type="InterPro" id="IPR036424">
    <property type="entry name" value="UPP_synth-like_sf"/>
</dbReference>
<dbReference type="NCBIfam" id="TIGR00055">
    <property type="entry name" value="uppS"/>
    <property type="match status" value="1"/>
</dbReference>
<dbReference type="PANTHER" id="PTHR10291:SF43">
    <property type="entry name" value="DEHYDRODOLICHYL DIPHOSPHATE SYNTHASE COMPLEX SUBUNIT DHDDS"/>
    <property type="match status" value="1"/>
</dbReference>
<dbReference type="PANTHER" id="PTHR10291">
    <property type="entry name" value="DEHYDRODOLICHYL DIPHOSPHATE SYNTHASE FAMILY MEMBER"/>
    <property type="match status" value="1"/>
</dbReference>
<dbReference type="Pfam" id="PF01255">
    <property type="entry name" value="Prenyltransf"/>
    <property type="match status" value="1"/>
</dbReference>
<dbReference type="SUPFAM" id="SSF64005">
    <property type="entry name" value="Undecaprenyl diphosphate synthase"/>
    <property type="match status" value="1"/>
</dbReference>
<dbReference type="PROSITE" id="PS01066">
    <property type="entry name" value="UPP_SYNTHASE"/>
    <property type="match status" value="1"/>
</dbReference>
<comment type="function">
    <text evidence="1">Catalyzes the sequential condensation of isopentenyl diphosphate (IPP) with geranylgeranyl diphosphate (GGPP) to yield (2Z,6Z,10Z,14Z,18Z,22Z,26Z,30E,34E,38E)-undecaprenyl diphosphate (tritrans,heptacis-UPP). It is probably the precursor of glycosyl carrier lipids.</text>
</comment>
<comment type="catalytic activity">
    <reaction evidence="1">
        <text>geranylgeranyl diphosphate + 7 isopentenyl diphosphate = tri-trans,hepta-cis-undecaprenyl diphosphate + 7 diphosphate</text>
        <dbReference type="Rhea" id="RHEA:27622"/>
        <dbReference type="ChEBI" id="CHEBI:33019"/>
        <dbReference type="ChEBI" id="CHEBI:57533"/>
        <dbReference type="ChEBI" id="CHEBI:60388"/>
        <dbReference type="ChEBI" id="CHEBI:128769"/>
        <dbReference type="EC" id="2.5.1.89"/>
    </reaction>
</comment>
<comment type="cofactor">
    <cofactor evidence="1">
        <name>Mg(2+)</name>
        <dbReference type="ChEBI" id="CHEBI:18420"/>
    </cofactor>
    <text evidence="1">Binds 2 magnesium ions per subunit.</text>
</comment>
<comment type="subunit">
    <text evidence="1">Homodimer.</text>
</comment>
<comment type="similarity">
    <text evidence="1">Belongs to the UPP synthase family.</text>
</comment>
<sequence>MIYRIISHIPSIFFKPAYDLYERYLLEKVKAGVIPKHVAIIMDGNRRWARKREKPPWYGHFFGSKKLEEIVEWCHELGIRILTVYAFSTENFKRSKEEVDRLMKLFEEKFRELVTDRRVHEYGIRVNVMGRKELLPKNVREAAEEAERVTRKYNNYFLNIALAYGGRSEIVDAIKDIVNDVLEGRLKLEDINEEIVRKYLYVPNMPDPDIVIRTGGEVRISNFLLYQIAYSELFFVDVYFPEFRKIDFLRIIREFQKRERRFGR</sequence>
<reference key="1">
    <citation type="journal article" date="1999" name="Genetics">
        <title>Divergence of the hyperthermophilic archaea Pyrococcus furiosus and P. horikoshii inferred from complete genomic sequences.</title>
        <authorList>
            <person name="Maeder D.L."/>
            <person name="Weiss R.B."/>
            <person name="Dunn D.M."/>
            <person name="Cherry J.L."/>
            <person name="Gonzalez J.M."/>
            <person name="DiRuggiero J."/>
            <person name="Robb F.T."/>
        </authorList>
    </citation>
    <scope>NUCLEOTIDE SEQUENCE [LARGE SCALE GENOMIC DNA]</scope>
    <source>
        <strain>ATCC 43587 / DSM 3638 / JCM 8422 / Vc1</strain>
    </source>
</reference>
<organism>
    <name type="scientific">Pyrococcus furiosus (strain ATCC 43587 / DSM 3638 / JCM 8422 / Vc1)</name>
    <dbReference type="NCBI Taxonomy" id="186497"/>
    <lineage>
        <taxon>Archaea</taxon>
        <taxon>Methanobacteriati</taxon>
        <taxon>Methanobacteriota</taxon>
        <taxon>Thermococci</taxon>
        <taxon>Thermococcales</taxon>
        <taxon>Thermococcaceae</taxon>
        <taxon>Pyrococcus</taxon>
    </lineage>
</organism>
<accession>Q8U0I8</accession>
<gene>
    <name evidence="1" type="primary">uppS</name>
    <name type="ordered locus">PF1599</name>
</gene>